<comment type="function">
    <text evidence="1">Condensation of UDP-2,3-diacylglucosamine and 2,3-diacylglucosamine-1-phosphate to form lipid A disaccharide, a precursor of lipid A, a phosphorylated glycolipid that anchors the lipopolysaccharide to the outer membrane of the cell.</text>
</comment>
<comment type="catalytic activity">
    <reaction evidence="1">
        <text>a lipid X + a UDP-2-N,3-O-bis[(3R)-3-hydroxyacyl]-alpha-D-glucosamine = a lipid A disaccharide + UDP + H(+)</text>
        <dbReference type="Rhea" id="RHEA:67828"/>
        <dbReference type="ChEBI" id="CHEBI:15378"/>
        <dbReference type="ChEBI" id="CHEBI:58223"/>
        <dbReference type="ChEBI" id="CHEBI:137748"/>
        <dbReference type="ChEBI" id="CHEBI:176338"/>
        <dbReference type="ChEBI" id="CHEBI:176343"/>
        <dbReference type="EC" id="2.4.1.182"/>
    </reaction>
</comment>
<comment type="pathway">
    <text evidence="1">Bacterial outer membrane biogenesis; LPS lipid A biosynthesis.</text>
</comment>
<comment type="similarity">
    <text evidence="1">Belongs to the LpxB family.</text>
</comment>
<name>LPXB_AERHH</name>
<dbReference type="EC" id="2.4.1.182" evidence="1"/>
<dbReference type="EMBL" id="CP000462">
    <property type="protein sequence ID" value="ABK36186.1"/>
    <property type="molecule type" value="Genomic_DNA"/>
</dbReference>
<dbReference type="RefSeq" id="WP_011705104.1">
    <property type="nucleotide sequence ID" value="NC_008570.1"/>
</dbReference>
<dbReference type="RefSeq" id="YP_855727.1">
    <property type="nucleotide sequence ID" value="NC_008570.1"/>
</dbReference>
<dbReference type="SMR" id="A0KHH6"/>
<dbReference type="STRING" id="380703.AHA_1186"/>
<dbReference type="CAZy" id="GT19">
    <property type="family name" value="Glycosyltransferase Family 19"/>
</dbReference>
<dbReference type="DNASU" id="4487261"/>
<dbReference type="EnsemblBacteria" id="ABK36186">
    <property type="protein sequence ID" value="ABK36186"/>
    <property type="gene ID" value="AHA_1186"/>
</dbReference>
<dbReference type="GeneID" id="4487261"/>
<dbReference type="KEGG" id="aha:AHA_1186"/>
<dbReference type="PATRIC" id="fig|380703.7.peg.1193"/>
<dbReference type="eggNOG" id="COG0763">
    <property type="taxonomic scope" value="Bacteria"/>
</dbReference>
<dbReference type="HOGENOM" id="CLU_036577_3_0_6"/>
<dbReference type="OrthoDB" id="9801642at2"/>
<dbReference type="UniPathway" id="UPA00973"/>
<dbReference type="Proteomes" id="UP000000756">
    <property type="component" value="Chromosome"/>
</dbReference>
<dbReference type="GO" id="GO:0016020">
    <property type="term" value="C:membrane"/>
    <property type="evidence" value="ECO:0007669"/>
    <property type="project" value="GOC"/>
</dbReference>
<dbReference type="GO" id="GO:0008915">
    <property type="term" value="F:lipid-A-disaccharide synthase activity"/>
    <property type="evidence" value="ECO:0007669"/>
    <property type="project" value="UniProtKB-UniRule"/>
</dbReference>
<dbReference type="GO" id="GO:0005543">
    <property type="term" value="F:phospholipid binding"/>
    <property type="evidence" value="ECO:0007669"/>
    <property type="project" value="TreeGrafter"/>
</dbReference>
<dbReference type="GO" id="GO:0009245">
    <property type="term" value="P:lipid A biosynthetic process"/>
    <property type="evidence" value="ECO:0007669"/>
    <property type="project" value="UniProtKB-UniRule"/>
</dbReference>
<dbReference type="HAMAP" id="MF_00392">
    <property type="entry name" value="LpxB"/>
    <property type="match status" value="1"/>
</dbReference>
<dbReference type="InterPro" id="IPR003835">
    <property type="entry name" value="Glyco_trans_19"/>
</dbReference>
<dbReference type="NCBIfam" id="TIGR00215">
    <property type="entry name" value="lpxB"/>
    <property type="match status" value="1"/>
</dbReference>
<dbReference type="PANTHER" id="PTHR30372">
    <property type="entry name" value="LIPID-A-DISACCHARIDE SYNTHASE"/>
    <property type="match status" value="1"/>
</dbReference>
<dbReference type="PANTHER" id="PTHR30372:SF4">
    <property type="entry name" value="LIPID-A-DISACCHARIDE SYNTHASE, MITOCHONDRIAL-RELATED"/>
    <property type="match status" value="1"/>
</dbReference>
<dbReference type="Pfam" id="PF02684">
    <property type="entry name" value="LpxB"/>
    <property type="match status" value="1"/>
</dbReference>
<dbReference type="SUPFAM" id="SSF53756">
    <property type="entry name" value="UDP-Glycosyltransferase/glycogen phosphorylase"/>
    <property type="match status" value="1"/>
</dbReference>
<protein>
    <recommendedName>
        <fullName evidence="1">Lipid-A-disaccharide synthase</fullName>
        <ecNumber evidence="1">2.4.1.182</ecNumber>
    </recommendedName>
</protein>
<proteinExistence type="inferred from homology"/>
<organism>
    <name type="scientific">Aeromonas hydrophila subsp. hydrophila (strain ATCC 7966 / DSM 30187 / BCRC 13018 / CCUG 14551 / JCM 1027 / KCTC 2358 / NCIMB 9240 / NCTC 8049)</name>
    <dbReference type="NCBI Taxonomy" id="380703"/>
    <lineage>
        <taxon>Bacteria</taxon>
        <taxon>Pseudomonadati</taxon>
        <taxon>Pseudomonadota</taxon>
        <taxon>Gammaproteobacteria</taxon>
        <taxon>Aeromonadales</taxon>
        <taxon>Aeromonadaceae</taxon>
        <taxon>Aeromonas</taxon>
    </lineage>
</organism>
<gene>
    <name evidence="1" type="primary">lpxB</name>
    <name type="ordered locus">AHA_1186</name>
</gene>
<keyword id="KW-0328">Glycosyltransferase</keyword>
<keyword id="KW-0441">Lipid A biosynthesis</keyword>
<keyword id="KW-0444">Lipid biosynthesis</keyword>
<keyword id="KW-0443">Lipid metabolism</keyword>
<keyword id="KW-1185">Reference proteome</keyword>
<keyword id="KW-0808">Transferase</keyword>
<sequence length="379" mass="42254">MPDPVRIGIVAGEVSGDILAAGLVRELQARYPDAQFEGIAGPRMQALGVKALFEMEELSVMGITEVLGRLPRILKVRRELLRHFIANPPDIFIGVDAPDFNIGVELKLRRAGIKTVHYVSPSVWAWRQNRIHKIKAATDMVLAFLPFEKAFYDRFDAPCRFVGHTMADDIPLVPDQAAVRRTLGIDANRRWLAVLPGSRSAEVGFMSPLFLEACKHLTVRYPDLGFIVPLVNQKRREQFLAIKAELAPDLDMVLLEGQGREAMIAADVVMLASGTAALEAMLVKKPMVVGYKLKPFSYWLAQRLVKTEFVSLPNLLAGRMLVPELIQHECTPENLVVEVSKFFEHDNSALVNTFTELHQLIRCNADQQAAEAVAELLGR</sequence>
<evidence type="ECO:0000255" key="1">
    <source>
        <dbReference type="HAMAP-Rule" id="MF_00392"/>
    </source>
</evidence>
<feature type="chain" id="PRO_1000049382" description="Lipid-A-disaccharide synthase">
    <location>
        <begin position="1"/>
        <end position="379"/>
    </location>
</feature>
<accession>A0KHH6</accession>
<reference key="1">
    <citation type="journal article" date="2006" name="J. Bacteriol.">
        <title>Genome sequence of Aeromonas hydrophila ATCC 7966T: jack of all trades.</title>
        <authorList>
            <person name="Seshadri R."/>
            <person name="Joseph S.W."/>
            <person name="Chopra A.K."/>
            <person name="Sha J."/>
            <person name="Shaw J."/>
            <person name="Graf J."/>
            <person name="Haft D.H."/>
            <person name="Wu M."/>
            <person name="Ren Q."/>
            <person name="Rosovitz M.J."/>
            <person name="Madupu R."/>
            <person name="Tallon L."/>
            <person name="Kim M."/>
            <person name="Jin S."/>
            <person name="Vuong H."/>
            <person name="Stine O.C."/>
            <person name="Ali A."/>
            <person name="Horneman A.J."/>
            <person name="Heidelberg J.F."/>
        </authorList>
    </citation>
    <scope>NUCLEOTIDE SEQUENCE [LARGE SCALE GENOMIC DNA]</scope>
    <source>
        <strain>ATCC 7966 / DSM 30187 / BCRC 13018 / CCUG 14551 / JCM 1027 / KCTC 2358 / NCIMB 9240 / NCTC 8049</strain>
    </source>
</reference>